<dbReference type="EMBL" id="AP009153">
    <property type="protein sequence ID" value="BAH39455.1"/>
    <property type="molecule type" value="Genomic_DNA"/>
</dbReference>
<dbReference type="SMR" id="C1AB49"/>
<dbReference type="STRING" id="379066.GAU_2413"/>
<dbReference type="KEGG" id="gau:GAU_2413"/>
<dbReference type="eggNOG" id="COG0218">
    <property type="taxonomic scope" value="Bacteria"/>
</dbReference>
<dbReference type="HOGENOM" id="CLU_033732_3_0_0"/>
<dbReference type="Proteomes" id="UP000002209">
    <property type="component" value="Chromosome"/>
</dbReference>
<dbReference type="GO" id="GO:0005525">
    <property type="term" value="F:GTP binding"/>
    <property type="evidence" value="ECO:0007669"/>
    <property type="project" value="UniProtKB-UniRule"/>
</dbReference>
<dbReference type="GO" id="GO:0046872">
    <property type="term" value="F:metal ion binding"/>
    <property type="evidence" value="ECO:0007669"/>
    <property type="project" value="UniProtKB-KW"/>
</dbReference>
<dbReference type="GO" id="GO:0000917">
    <property type="term" value="P:division septum assembly"/>
    <property type="evidence" value="ECO:0007669"/>
    <property type="project" value="UniProtKB-KW"/>
</dbReference>
<dbReference type="CDD" id="cd01876">
    <property type="entry name" value="YihA_EngB"/>
    <property type="match status" value="1"/>
</dbReference>
<dbReference type="Gene3D" id="3.40.50.300">
    <property type="entry name" value="P-loop containing nucleotide triphosphate hydrolases"/>
    <property type="match status" value="1"/>
</dbReference>
<dbReference type="HAMAP" id="MF_00321">
    <property type="entry name" value="GTPase_EngB"/>
    <property type="match status" value="1"/>
</dbReference>
<dbReference type="InterPro" id="IPR030393">
    <property type="entry name" value="G_ENGB_dom"/>
</dbReference>
<dbReference type="InterPro" id="IPR006073">
    <property type="entry name" value="GTP-bd"/>
</dbReference>
<dbReference type="InterPro" id="IPR019987">
    <property type="entry name" value="GTP-bd_ribosome_bio_YsxC"/>
</dbReference>
<dbReference type="InterPro" id="IPR027417">
    <property type="entry name" value="P-loop_NTPase"/>
</dbReference>
<dbReference type="InterPro" id="IPR005225">
    <property type="entry name" value="Small_GTP-bd"/>
</dbReference>
<dbReference type="NCBIfam" id="TIGR03598">
    <property type="entry name" value="GTPase_YsxC"/>
    <property type="match status" value="1"/>
</dbReference>
<dbReference type="NCBIfam" id="TIGR00231">
    <property type="entry name" value="small_GTP"/>
    <property type="match status" value="1"/>
</dbReference>
<dbReference type="PANTHER" id="PTHR11649:SF13">
    <property type="entry name" value="ENGB-TYPE G DOMAIN-CONTAINING PROTEIN"/>
    <property type="match status" value="1"/>
</dbReference>
<dbReference type="PANTHER" id="PTHR11649">
    <property type="entry name" value="MSS1/TRME-RELATED GTP-BINDING PROTEIN"/>
    <property type="match status" value="1"/>
</dbReference>
<dbReference type="Pfam" id="PF01926">
    <property type="entry name" value="MMR_HSR1"/>
    <property type="match status" value="1"/>
</dbReference>
<dbReference type="SUPFAM" id="SSF52540">
    <property type="entry name" value="P-loop containing nucleoside triphosphate hydrolases"/>
    <property type="match status" value="1"/>
</dbReference>
<dbReference type="PROSITE" id="PS51706">
    <property type="entry name" value="G_ENGB"/>
    <property type="match status" value="1"/>
</dbReference>
<reference key="1">
    <citation type="submission" date="2006-03" db="EMBL/GenBank/DDBJ databases">
        <title>Complete genome sequence of Gemmatimonas aurantiaca T-27 that represents a novel phylum Gemmatimonadetes.</title>
        <authorList>
            <person name="Takasaki K."/>
            <person name="Ichikawa N."/>
            <person name="Miura H."/>
            <person name="Matsushita S."/>
            <person name="Watanabe Y."/>
            <person name="Oguchi A."/>
            <person name="Ankai A."/>
            <person name="Yashiro I."/>
            <person name="Takahashi M."/>
            <person name="Terui Y."/>
            <person name="Fukui S."/>
            <person name="Yokoyama H."/>
            <person name="Tanikawa S."/>
            <person name="Hanada S."/>
            <person name="Kamagata Y."/>
            <person name="Fujita N."/>
        </authorList>
    </citation>
    <scope>NUCLEOTIDE SEQUENCE [LARGE SCALE GENOMIC DNA]</scope>
    <source>
        <strain>DSM 14586 / JCM 11422 / NBRC 100505 / T-27</strain>
    </source>
</reference>
<comment type="function">
    <text evidence="1">Necessary for normal cell division and for the maintenance of normal septation.</text>
</comment>
<comment type="cofactor">
    <cofactor evidence="1">
        <name>Mg(2+)</name>
        <dbReference type="ChEBI" id="CHEBI:18420"/>
    </cofactor>
</comment>
<comment type="similarity">
    <text evidence="1">Belongs to the TRAFAC class TrmE-Era-EngA-EngB-Septin-like GTPase superfamily. EngB GTPase family.</text>
</comment>
<protein>
    <recommendedName>
        <fullName evidence="1">Probable GTP-binding protein EngB</fullName>
    </recommendedName>
</protein>
<feature type="chain" id="PRO_1000205128" description="Probable GTP-binding protein EngB">
    <location>
        <begin position="1"/>
        <end position="204"/>
    </location>
</feature>
<feature type="domain" description="EngB-type G" evidence="1">
    <location>
        <begin position="23"/>
        <end position="195"/>
    </location>
</feature>
<feature type="binding site" evidence="1">
    <location>
        <begin position="31"/>
        <end position="38"/>
    </location>
    <ligand>
        <name>GTP</name>
        <dbReference type="ChEBI" id="CHEBI:37565"/>
    </ligand>
</feature>
<feature type="binding site" evidence="1">
    <location>
        <position position="38"/>
    </location>
    <ligand>
        <name>Mg(2+)</name>
        <dbReference type="ChEBI" id="CHEBI:18420"/>
    </ligand>
</feature>
<feature type="binding site" evidence="1">
    <location>
        <begin position="58"/>
        <end position="62"/>
    </location>
    <ligand>
        <name>GTP</name>
        <dbReference type="ChEBI" id="CHEBI:37565"/>
    </ligand>
</feature>
<feature type="binding site" evidence="1">
    <location>
        <position position="60"/>
    </location>
    <ligand>
        <name>Mg(2+)</name>
        <dbReference type="ChEBI" id="CHEBI:18420"/>
    </ligand>
</feature>
<feature type="binding site" evidence="1">
    <location>
        <begin position="76"/>
        <end position="79"/>
    </location>
    <ligand>
        <name>GTP</name>
        <dbReference type="ChEBI" id="CHEBI:37565"/>
    </ligand>
</feature>
<feature type="binding site" evidence="1">
    <location>
        <begin position="143"/>
        <end position="146"/>
    </location>
    <ligand>
        <name>GTP</name>
        <dbReference type="ChEBI" id="CHEBI:37565"/>
    </ligand>
</feature>
<feature type="binding site" evidence="1">
    <location>
        <begin position="174"/>
        <end position="176"/>
    </location>
    <ligand>
        <name>GTP</name>
        <dbReference type="ChEBI" id="CHEBI:37565"/>
    </ligand>
</feature>
<sequence>MVIRHLEYLGPMATIDGWRPEITLPEIAFVGRSNVGKSSLLNKLMRRKSFARVSTTPGRTREIHFFDVNHQFVLADLPGYGYARISKERKAEWRPLIEGYLGTSPRLQGVVQLLDVRHDPTNDDYVMMDFLADVGVPTIVAITKIDKLKPAQARARVEELSKRLGLDADQVVPFSAHTGAGRDELASALMQLLAMPDWRTTEEE</sequence>
<evidence type="ECO:0000255" key="1">
    <source>
        <dbReference type="HAMAP-Rule" id="MF_00321"/>
    </source>
</evidence>
<gene>
    <name evidence="1" type="primary">engB</name>
    <name type="ordered locus">GAU_2413</name>
</gene>
<keyword id="KW-0131">Cell cycle</keyword>
<keyword id="KW-0132">Cell division</keyword>
<keyword id="KW-0342">GTP-binding</keyword>
<keyword id="KW-0460">Magnesium</keyword>
<keyword id="KW-0479">Metal-binding</keyword>
<keyword id="KW-0547">Nucleotide-binding</keyword>
<keyword id="KW-1185">Reference proteome</keyword>
<keyword id="KW-0717">Septation</keyword>
<proteinExistence type="inferred from homology"/>
<organism>
    <name type="scientific">Gemmatimonas aurantiaca (strain DSM 14586 / JCM 11422 / NBRC 100505 / T-27)</name>
    <dbReference type="NCBI Taxonomy" id="379066"/>
    <lineage>
        <taxon>Bacteria</taxon>
        <taxon>Pseudomonadati</taxon>
        <taxon>Gemmatimonadota</taxon>
        <taxon>Gemmatimonadia</taxon>
        <taxon>Gemmatimonadales</taxon>
        <taxon>Gemmatimonadaceae</taxon>
        <taxon>Gemmatimonas</taxon>
    </lineage>
</organism>
<accession>C1AB49</accession>
<name>ENGB_GEMAT</name>